<accession>A0A823A767</accession>
<dbReference type="EC" id="1.1.1.-" evidence="6"/>
<dbReference type="EMBL" id="BK013344">
    <property type="protein sequence ID" value="DAD54582.1"/>
    <property type="molecule type" value="Genomic_DNA"/>
</dbReference>
<dbReference type="SMR" id="A0A823A767"/>
<dbReference type="GO" id="GO:0016491">
    <property type="term" value="F:oxidoreductase activity"/>
    <property type="evidence" value="ECO:0007669"/>
    <property type="project" value="UniProtKB-KW"/>
</dbReference>
<dbReference type="Gene3D" id="3.40.50.720">
    <property type="entry name" value="NAD(P)-binding Rossmann-like Domain"/>
    <property type="match status" value="1"/>
</dbReference>
<dbReference type="InterPro" id="IPR036291">
    <property type="entry name" value="NAD(P)-bd_dom_sf"/>
</dbReference>
<dbReference type="InterPro" id="IPR002347">
    <property type="entry name" value="SDR_fam"/>
</dbReference>
<dbReference type="PANTHER" id="PTHR24320:SF148">
    <property type="entry name" value="NAD(P)-BINDING ROSSMANN-FOLD SUPERFAMILY PROTEIN"/>
    <property type="match status" value="1"/>
</dbReference>
<dbReference type="PANTHER" id="PTHR24320">
    <property type="entry name" value="RETINOL DEHYDROGENASE"/>
    <property type="match status" value="1"/>
</dbReference>
<dbReference type="Pfam" id="PF00106">
    <property type="entry name" value="adh_short"/>
    <property type="match status" value="1"/>
</dbReference>
<dbReference type="PRINTS" id="PR00081">
    <property type="entry name" value="GDHRDH"/>
</dbReference>
<dbReference type="PRINTS" id="PR00080">
    <property type="entry name" value="SDRFAMILY"/>
</dbReference>
<dbReference type="SUPFAM" id="SSF51735">
    <property type="entry name" value="NAD(P)-binding Rossmann-fold domains"/>
    <property type="match status" value="1"/>
</dbReference>
<protein>
    <recommendedName>
        <fullName evidence="4">Oxidoreductase fscI</fullName>
        <ecNumber evidence="6">1.1.1.-</ecNumber>
    </recommendedName>
    <alternativeName>
        <fullName evidence="4">Fusarochromene biosynthesis cluster protein I</fullName>
    </alternativeName>
    <alternativeName>
        <fullName evidence="5">Short-chain dehydrogenase/reductase fscI</fullName>
        <shortName evidence="5">SDR fscI</shortName>
    </alternativeName>
</protein>
<comment type="function">
    <text evidence="3 6">Oxidoreductase; part of the fragmented gene cluster that mediates the biosynthesis of fusarochromene, a tryptophan-derived metabolite closely related to a group of mycotoxins including fusarochromanone (PubMed:33107888). Within the pathway, fscI catalyzes the formation of the chromene ring from the prenyl moity added by the prenyltransferase fscG (Probable). The first step of the pathway is the epimerization of L-tryptophan to D-tryptophan in the presence of the NRPS-like tryptophan epimerase fscC. D-tryptophan is subsequently hydroxylated by the tryptophan 6-hydroxylase fscE to yield 6-hydroxytryptophan. The pyrrole ring undergoes cleavaged by the tryptophan 2,3-dioxygenase fscD and is finally converted to 4-hydroxykyrunenine by the hydrolase fscH. The NRPS-like oxidoreductase fscA reduces the carboxyl group to primary alcohol and the DMATS-type prenyltransferase fscG performs prenylation, followed by the formation of a chromene ring catalyzed by the oxidoreductase fscI, which leads to desacetylfusarochromene. Epoxidation by fscF and rearrangement reactions of chromene double bonds convert compound desacetylfusarochromene to fusarochromanones. Although specific acetyltransferases were not found near the fsc gene cluster, several predicted enzymes containing the N-acetyltransferase superfamily domain are present in the genome of F.equiseti. These predicted enzymes may have the potential to convert desacetylfusarochromene to fusarochromene (Probable).</text>
</comment>
<comment type="pathway">
    <text evidence="6">Secondary metabolite biosynthesis.</text>
</comment>
<comment type="similarity">
    <text evidence="5">Belongs to the short-chain dehydrogenases/reductases (SDR) family.</text>
</comment>
<feature type="chain" id="PRO_0000461417" description="Oxidoreductase fscI">
    <location>
        <begin position="1"/>
        <end position="258"/>
    </location>
</feature>
<feature type="active site" description="Proton donor" evidence="2">
    <location>
        <position position="163"/>
    </location>
</feature>
<feature type="binding site" evidence="1">
    <location>
        <position position="34"/>
    </location>
    <ligand>
        <name>NADP(+)</name>
        <dbReference type="ChEBI" id="CHEBI:58349"/>
    </ligand>
</feature>
<feature type="binding site" evidence="1">
    <location>
        <position position="59"/>
    </location>
    <ligand>
        <name>NADP(+)</name>
        <dbReference type="ChEBI" id="CHEBI:58349"/>
    </ligand>
</feature>
<feature type="binding site" evidence="1">
    <location>
        <position position="82"/>
    </location>
    <ligand>
        <name>NADP(+)</name>
        <dbReference type="ChEBI" id="CHEBI:58349"/>
    </ligand>
</feature>
<feature type="binding site" evidence="2">
    <location>
        <position position="109"/>
    </location>
    <ligand>
        <name>NADP(+)</name>
        <dbReference type="ChEBI" id="CHEBI:58349"/>
    </ligand>
</feature>
<feature type="binding site" evidence="1">
    <location>
        <position position="141"/>
    </location>
    <ligand>
        <name>NADP(+)</name>
        <dbReference type="ChEBI" id="CHEBI:58349"/>
    </ligand>
</feature>
<feature type="binding site" evidence="2">
    <location>
        <position position="193"/>
    </location>
    <ligand>
        <name>NADP(+)</name>
        <dbReference type="ChEBI" id="CHEBI:58349"/>
    </ligand>
</feature>
<sequence length="258" mass="27473">MFDGTTQAQDVAAAFQGEISGKTFVITGVSFGGLGAAVCEALAPYGPGHLIITGRDIQRPQEVAKALIAQYPDLQISVIQMDLALPKSVENAAQEIKKVASRVHVLVNNAGVMCIPDRTLTEKGIEAHLAINYVGHFLLTKLLAEQMSSTDSSPVQGRVINVSSSAHTVSPFRFGDPHFIGSSDLLPDEEPSREACKAFGIPWETSYSPLVAYAQSKTAVILHAKAISSGVLRDGITAFSVNPGGKWNPTILYVLCHC</sequence>
<reference key="1">
    <citation type="journal article" date="2021" name="Org. Biomol. Chem.">
        <title>Fusarochromene, a novel tryptophan-derived metabolite from Fusarium sacchari.</title>
        <authorList>
            <person name="Marshall J.W."/>
            <person name="de Mattos-Shipley K.M.J."/>
            <person name="Ghannam I.A.Y."/>
            <person name="Munawar A."/>
            <person name="Killen J.C."/>
            <person name="Lazarus C.M."/>
            <person name="Cox R.J."/>
            <person name="Willis C.L."/>
            <person name="Simpson T.J."/>
        </authorList>
    </citation>
    <scope>NUCLEOTIDE SEQUENCE [GENOMIC DNA]</scope>
    <scope>FUNCTION</scope>
    <scope>PATHWAY</scope>
</reference>
<proteinExistence type="inferred from homology"/>
<organism>
    <name type="scientific">Fusarium equiseti</name>
    <name type="common">Fusarium scirpi</name>
    <dbReference type="NCBI Taxonomy" id="61235"/>
    <lineage>
        <taxon>Eukaryota</taxon>
        <taxon>Fungi</taxon>
        <taxon>Dikarya</taxon>
        <taxon>Ascomycota</taxon>
        <taxon>Pezizomycotina</taxon>
        <taxon>Sordariomycetes</taxon>
        <taxon>Hypocreomycetidae</taxon>
        <taxon>Hypocreales</taxon>
        <taxon>Nectriaceae</taxon>
        <taxon>Fusarium</taxon>
        <taxon>Fusarium incarnatum-equiseti species complex</taxon>
    </lineage>
</organism>
<evidence type="ECO:0000250" key="1">
    <source>
        <dbReference type="UniProtKB" id="L0E2Z4"/>
    </source>
</evidence>
<evidence type="ECO:0000250" key="2">
    <source>
        <dbReference type="UniProtKB" id="O93868"/>
    </source>
</evidence>
<evidence type="ECO:0000269" key="3">
    <source>
    </source>
</evidence>
<evidence type="ECO:0000303" key="4">
    <source>
    </source>
</evidence>
<evidence type="ECO:0000305" key="5"/>
<evidence type="ECO:0000305" key="6">
    <source>
    </source>
</evidence>
<name>FSCI_FUSEQ</name>
<keyword id="KW-0521">NADP</keyword>
<keyword id="KW-0560">Oxidoreductase</keyword>
<gene>
    <name evidence="4" type="primary">fscI</name>
</gene>